<protein>
    <recommendedName>
        <fullName>Mitogen-activated protein kinase HOG1</fullName>
        <shortName>MAP kinase HOG1</shortName>
        <ecNumber evidence="2">2.7.11.24</ecNumber>
    </recommendedName>
</protein>
<comment type="function">
    <text evidence="4 7">Proline-directed serine/threonine-protein kinase involved in a signal transduction pathway that is activated by changes in the osmolarity of the extracellular environment. Controls osmotic regulation of transcription of target genes (By similarity). Involved in the virulence and conidia formation. Mediates tannic acid-induced laccase expression and cryparin expression.</text>
</comment>
<comment type="catalytic activity">
    <reaction evidence="2">
        <text>L-seryl-[protein] + ATP = O-phospho-L-seryl-[protein] + ADP + H(+)</text>
        <dbReference type="Rhea" id="RHEA:17989"/>
        <dbReference type="Rhea" id="RHEA-COMP:9863"/>
        <dbReference type="Rhea" id="RHEA-COMP:11604"/>
        <dbReference type="ChEBI" id="CHEBI:15378"/>
        <dbReference type="ChEBI" id="CHEBI:29999"/>
        <dbReference type="ChEBI" id="CHEBI:30616"/>
        <dbReference type="ChEBI" id="CHEBI:83421"/>
        <dbReference type="ChEBI" id="CHEBI:456216"/>
        <dbReference type="EC" id="2.7.11.24"/>
    </reaction>
    <physiologicalReaction direction="left-to-right" evidence="2">
        <dbReference type="Rhea" id="RHEA:17990"/>
    </physiologicalReaction>
</comment>
<comment type="catalytic activity">
    <reaction evidence="2">
        <text>L-threonyl-[protein] + ATP = O-phospho-L-threonyl-[protein] + ADP + H(+)</text>
        <dbReference type="Rhea" id="RHEA:46608"/>
        <dbReference type="Rhea" id="RHEA-COMP:11060"/>
        <dbReference type="Rhea" id="RHEA-COMP:11605"/>
        <dbReference type="ChEBI" id="CHEBI:15378"/>
        <dbReference type="ChEBI" id="CHEBI:30013"/>
        <dbReference type="ChEBI" id="CHEBI:30616"/>
        <dbReference type="ChEBI" id="CHEBI:61977"/>
        <dbReference type="ChEBI" id="CHEBI:456216"/>
        <dbReference type="EC" id="2.7.11.24"/>
    </reaction>
    <physiologicalReaction direction="left-to-right" evidence="2">
        <dbReference type="Rhea" id="RHEA:46609"/>
    </physiologicalReaction>
</comment>
<comment type="cofactor">
    <cofactor evidence="3">
        <name>Mg(2+)</name>
        <dbReference type="ChEBI" id="CHEBI:18420"/>
    </cofactor>
</comment>
<comment type="activity regulation">
    <text evidence="1 7">Activated by tyrosine and threonine phosphorylation (By similarity). Hypoviruses like CHV1-EP713 induce inactivation by lowering the degree of phosphorylation in response to various environmental stresses.</text>
</comment>
<comment type="subcellular location">
    <subcellularLocation>
        <location evidence="1">Cytoplasm</location>
    </subcellularLocation>
    <subcellularLocation>
        <location evidence="1">Nucleus</location>
    </subcellularLocation>
</comment>
<comment type="domain">
    <text>The TXY motif contains the threonine and tyrosine residues whose phosphorylation activates the MAP kinases.</text>
</comment>
<comment type="PTM">
    <text evidence="1 7">Dually phosphorylated on Thr-171 and Tyr-173, which activates the enzyme (By similarity). Phosphorylated in response of osmotic stress.</text>
</comment>
<comment type="similarity">
    <text evidence="5">Belongs to the protein kinase superfamily. Ser/Thr protein kinase family. MAP kinase subfamily. HOG1 sub-subfamily.</text>
</comment>
<sequence length="358" mass="40945">MAEFVRAQIFGTTFEITSRYSDLQPVGMGAFGLVCSARDQLTNQNVAIKKIMKPFSTPVLAKRTYRELKLLKHLRHENIISLSDIFISPLEDIYFVTELLGTDLHRLLTSRPLEKQFIQYFLYQIMRGLKYVHSAGVVHRDLKPSNILVNENCDLKICDFGLARIQDPQMTGYVSTRYYRAPEIMLTWQKYDVEVDIWSAGCIFAEMLEGKPLFPGKDHVNQFSIITELLGTPPDDVINTIASENTLRFVKSLPKRERQPLASKFKNADEQAVDLLERMLVFDPKKRITASDALAHEYLAPYHDPTDEPVAEEKFDWSFNDADLPVDTWKIMMYSEILDYHNVDASGASAAMGEFNGQ</sequence>
<organism>
    <name type="scientific">Cryphonectria parasitica</name>
    <name type="common">Chestnut blight fungus</name>
    <name type="synonym">Endothia parasitica</name>
    <dbReference type="NCBI Taxonomy" id="5116"/>
    <lineage>
        <taxon>Eukaryota</taxon>
        <taxon>Fungi</taxon>
        <taxon>Dikarya</taxon>
        <taxon>Ascomycota</taxon>
        <taxon>Pezizomycotina</taxon>
        <taxon>Sordariomycetes</taxon>
        <taxon>Sordariomycetidae</taxon>
        <taxon>Diaporthales</taxon>
        <taxon>Cryphonectriaceae</taxon>
        <taxon>Cryphonectria-Endothia species complex</taxon>
        <taxon>Cryphonectria</taxon>
    </lineage>
</organism>
<feature type="chain" id="PRO_0000289686" description="Mitogen-activated protein kinase HOG1">
    <location>
        <begin position="1"/>
        <end position="358"/>
    </location>
</feature>
<feature type="domain" description="Protein kinase" evidence="5">
    <location>
        <begin position="20"/>
        <end position="299"/>
    </location>
</feature>
<feature type="short sequence motif" description="TXY">
    <location>
        <begin position="171"/>
        <end position="173"/>
    </location>
</feature>
<feature type="active site" description="Proton acceptor" evidence="5 6">
    <location>
        <position position="141"/>
    </location>
</feature>
<feature type="binding site" evidence="5">
    <location>
        <begin position="26"/>
        <end position="34"/>
    </location>
    <ligand>
        <name>ATP</name>
        <dbReference type="ChEBI" id="CHEBI:30616"/>
    </ligand>
</feature>
<feature type="binding site" evidence="5">
    <location>
        <position position="49"/>
    </location>
    <ligand>
        <name>ATP</name>
        <dbReference type="ChEBI" id="CHEBI:30616"/>
    </ligand>
</feature>
<feature type="modified residue" description="Phosphothreonine" evidence="1">
    <location>
        <position position="171"/>
    </location>
</feature>
<feature type="modified residue" description="Phosphotyrosine" evidence="1">
    <location>
        <position position="173"/>
    </location>
</feature>
<evidence type="ECO:0000250" key="1"/>
<evidence type="ECO:0000250" key="2">
    <source>
        <dbReference type="UniProtKB" id="P32485"/>
    </source>
</evidence>
<evidence type="ECO:0000250" key="3">
    <source>
        <dbReference type="UniProtKB" id="Q16539"/>
    </source>
</evidence>
<evidence type="ECO:0000250" key="4">
    <source>
        <dbReference type="UniProtKB" id="Q4WSF6"/>
    </source>
</evidence>
<evidence type="ECO:0000255" key="5">
    <source>
        <dbReference type="PROSITE-ProRule" id="PRU00159"/>
    </source>
</evidence>
<evidence type="ECO:0000255" key="6">
    <source>
        <dbReference type="PROSITE-ProRule" id="PRU10027"/>
    </source>
</evidence>
<evidence type="ECO:0000269" key="7">
    <source>
    </source>
</evidence>
<reference key="1">
    <citation type="journal article" date="2004" name="Mol. Microbiol.">
        <title>Characterization of HOG1 homologue, CpMK1, from Cryphonectria parasitica and evidence for hypovirus-mediated perturbation of its phosphorylation in response to hypertonic stress.</title>
        <authorList>
            <person name="Park S.-M."/>
            <person name="Choi E.-S."/>
            <person name="Kim M.-J."/>
            <person name="Cha B.-J."/>
            <person name="Yang M.-S."/>
            <person name="Kim D.-H."/>
        </authorList>
    </citation>
    <scope>NUCLEOTIDE SEQUENCE [GENOMIC DNA]</scope>
    <scope>FUNCTION</scope>
    <scope>PHOSPHORYLATION</scope>
    <scope>ACTIVITY REGULATION</scope>
    <source>
        <strain>ATCC 38755 / EP155</strain>
    </source>
</reference>
<keyword id="KW-0010">Activator</keyword>
<keyword id="KW-0067">ATP-binding</keyword>
<keyword id="KW-0963">Cytoplasm</keyword>
<keyword id="KW-0418">Kinase</keyword>
<keyword id="KW-0547">Nucleotide-binding</keyword>
<keyword id="KW-0539">Nucleus</keyword>
<keyword id="KW-0597">Phosphoprotein</keyword>
<keyword id="KW-0723">Serine/threonine-protein kinase</keyword>
<keyword id="KW-0804">Transcription</keyword>
<keyword id="KW-0805">Transcription regulation</keyword>
<keyword id="KW-0808">Transferase</keyword>
<dbReference type="EC" id="2.7.11.24" evidence="2"/>
<dbReference type="EMBL" id="AY166687">
    <property type="protein sequence ID" value="AAO27796.1"/>
    <property type="molecule type" value="Genomic_DNA"/>
</dbReference>
<dbReference type="SMR" id="Q875L0"/>
<dbReference type="OMA" id="NRYTDLN"/>
<dbReference type="PHI-base" id="PHI:342"/>
<dbReference type="GO" id="GO:0005737">
    <property type="term" value="C:cytoplasm"/>
    <property type="evidence" value="ECO:0007669"/>
    <property type="project" value="UniProtKB-SubCell"/>
</dbReference>
<dbReference type="GO" id="GO:0005634">
    <property type="term" value="C:nucleus"/>
    <property type="evidence" value="ECO:0007669"/>
    <property type="project" value="UniProtKB-SubCell"/>
</dbReference>
<dbReference type="GO" id="GO:0005524">
    <property type="term" value="F:ATP binding"/>
    <property type="evidence" value="ECO:0007669"/>
    <property type="project" value="UniProtKB-KW"/>
</dbReference>
<dbReference type="GO" id="GO:0004707">
    <property type="term" value="F:MAP kinase activity"/>
    <property type="evidence" value="ECO:0007669"/>
    <property type="project" value="UniProtKB-EC"/>
</dbReference>
<dbReference type="GO" id="GO:0106310">
    <property type="term" value="F:protein serine kinase activity"/>
    <property type="evidence" value="ECO:0007669"/>
    <property type="project" value="RHEA"/>
</dbReference>
<dbReference type="GO" id="GO:0051403">
    <property type="term" value="P:stress-activated MAPK cascade"/>
    <property type="evidence" value="ECO:0007669"/>
    <property type="project" value="InterPro"/>
</dbReference>
<dbReference type="CDD" id="cd07856">
    <property type="entry name" value="STKc_Sty1_Hog1"/>
    <property type="match status" value="1"/>
</dbReference>
<dbReference type="FunFam" id="1.10.510.10:FF:000049">
    <property type="entry name" value="Mitogen-activated protein kinase"/>
    <property type="match status" value="1"/>
</dbReference>
<dbReference type="FunFam" id="3.30.200.20:FF:000050">
    <property type="entry name" value="Mitogen-activated protein kinase"/>
    <property type="match status" value="1"/>
</dbReference>
<dbReference type="Gene3D" id="3.30.200.20">
    <property type="entry name" value="Phosphorylase Kinase, domain 1"/>
    <property type="match status" value="1"/>
</dbReference>
<dbReference type="Gene3D" id="1.10.510.10">
    <property type="entry name" value="Transferase(Phosphotransferase) domain 1"/>
    <property type="match status" value="1"/>
</dbReference>
<dbReference type="InterPro" id="IPR011009">
    <property type="entry name" value="Kinase-like_dom_sf"/>
</dbReference>
<dbReference type="InterPro" id="IPR050117">
    <property type="entry name" value="MAP_kinase"/>
</dbReference>
<dbReference type="InterPro" id="IPR003527">
    <property type="entry name" value="MAP_kinase_CS"/>
</dbReference>
<dbReference type="InterPro" id="IPR008352">
    <property type="entry name" value="MAPK_p38-like"/>
</dbReference>
<dbReference type="InterPro" id="IPR038783">
    <property type="entry name" value="MAPK_Sty1/Hog1"/>
</dbReference>
<dbReference type="InterPro" id="IPR000719">
    <property type="entry name" value="Prot_kinase_dom"/>
</dbReference>
<dbReference type="InterPro" id="IPR017441">
    <property type="entry name" value="Protein_kinase_ATP_BS"/>
</dbReference>
<dbReference type="InterPro" id="IPR008271">
    <property type="entry name" value="Ser/Thr_kinase_AS"/>
</dbReference>
<dbReference type="PANTHER" id="PTHR24055">
    <property type="entry name" value="MITOGEN-ACTIVATED PROTEIN KINASE"/>
    <property type="match status" value="1"/>
</dbReference>
<dbReference type="Pfam" id="PF00069">
    <property type="entry name" value="Pkinase"/>
    <property type="match status" value="1"/>
</dbReference>
<dbReference type="PRINTS" id="PR01773">
    <property type="entry name" value="P38MAPKINASE"/>
</dbReference>
<dbReference type="SMART" id="SM00220">
    <property type="entry name" value="S_TKc"/>
    <property type="match status" value="1"/>
</dbReference>
<dbReference type="SUPFAM" id="SSF56112">
    <property type="entry name" value="Protein kinase-like (PK-like)"/>
    <property type="match status" value="1"/>
</dbReference>
<dbReference type="PROSITE" id="PS01351">
    <property type="entry name" value="MAPK"/>
    <property type="match status" value="1"/>
</dbReference>
<dbReference type="PROSITE" id="PS00107">
    <property type="entry name" value="PROTEIN_KINASE_ATP"/>
    <property type="match status" value="1"/>
</dbReference>
<dbReference type="PROSITE" id="PS50011">
    <property type="entry name" value="PROTEIN_KINASE_DOM"/>
    <property type="match status" value="1"/>
</dbReference>
<dbReference type="PROSITE" id="PS00108">
    <property type="entry name" value="PROTEIN_KINASE_ST"/>
    <property type="match status" value="1"/>
</dbReference>
<gene>
    <name type="primary">HOG1</name>
</gene>
<accession>Q875L0</accession>
<proteinExistence type="evidence at protein level"/>
<name>HOG1_CRYPA</name>